<reference key="1">
    <citation type="journal article" date="2009" name="PLoS Genet.">
        <title>Organised genome dynamics in the Escherichia coli species results in highly diverse adaptive paths.</title>
        <authorList>
            <person name="Touchon M."/>
            <person name="Hoede C."/>
            <person name="Tenaillon O."/>
            <person name="Barbe V."/>
            <person name="Baeriswyl S."/>
            <person name="Bidet P."/>
            <person name="Bingen E."/>
            <person name="Bonacorsi S."/>
            <person name="Bouchier C."/>
            <person name="Bouvet O."/>
            <person name="Calteau A."/>
            <person name="Chiapello H."/>
            <person name="Clermont O."/>
            <person name="Cruveiller S."/>
            <person name="Danchin A."/>
            <person name="Diard M."/>
            <person name="Dossat C."/>
            <person name="Karoui M.E."/>
            <person name="Frapy E."/>
            <person name="Garry L."/>
            <person name="Ghigo J.M."/>
            <person name="Gilles A.M."/>
            <person name="Johnson J."/>
            <person name="Le Bouguenec C."/>
            <person name="Lescat M."/>
            <person name="Mangenot S."/>
            <person name="Martinez-Jehanne V."/>
            <person name="Matic I."/>
            <person name="Nassif X."/>
            <person name="Oztas S."/>
            <person name="Petit M.A."/>
            <person name="Pichon C."/>
            <person name="Rouy Z."/>
            <person name="Ruf C.S."/>
            <person name="Schneider D."/>
            <person name="Tourret J."/>
            <person name="Vacherie B."/>
            <person name="Vallenet D."/>
            <person name="Medigue C."/>
            <person name="Rocha E.P.C."/>
            <person name="Denamur E."/>
        </authorList>
    </citation>
    <scope>NUCLEOTIDE SEQUENCE [LARGE SCALE GENOMIC DNA]</scope>
    <source>
        <strain>ED1a</strain>
    </source>
</reference>
<evidence type="ECO:0000255" key="1">
    <source>
        <dbReference type="HAMAP-Rule" id="MF_01653"/>
    </source>
</evidence>
<proteinExistence type="inferred from homology"/>
<comment type="function">
    <text evidence="1">Catalyzes the non-heme iron(II)-dependent oxidative cleavage of 2,3-dihydroxyphenylpropionic acid and 2,3-dihydroxicinnamic acid into 2-hydroxy-6-ketononadienedioate and 2-hydroxy-6-ketononatrienedioate, respectively.</text>
</comment>
<comment type="catalytic activity">
    <reaction evidence="1">
        <text>3-(2,3-dihydroxyphenyl)propanoate + O2 = (2Z,4E)-2-hydroxy-6-oxonona-2,4-dienedioate + H(+)</text>
        <dbReference type="Rhea" id="RHEA:23840"/>
        <dbReference type="ChEBI" id="CHEBI:15378"/>
        <dbReference type="ChEBI" id="CHEBI:15379"/>
        <dbReference type="ChEBI" id="CHEBI:46951"/>
        <dbReference type="ChEBI" id="CHEBI:66887"/>
        <dbReference type="EC" id="1.13.11.16"/>
    </reaction>
</comment>
<comment type="catalytic activity">
    <reaction evidence="1">
        <text>(2E)-3-(2,3-dihydroxyphenyl)prop-2-enoate + O2 = (2Z,4E,7E)-2-hydroxy-6-oxonona-2,4,7-trienedioate + H(+)</text>
        <dbReference type="Rhea" id="RHEA:25054"/>
        <dbReference type="ChEBI" id="CHEBI:15378"/>
        <dbReference type="ChEBI" id="CHEBI:15379"/>
        <dbReference type="ChEBI" id="CHEBI:58642"/>
        <dbReference type="ChEBI" id="CHEBI:66888"/>
        <dbReference type="EC" id="1.13.11.16"/>
    </reaction>
</comment>
<comment type="cofactor">
    <cofactor evidence="1">
        <name>Fe(2+)</name>
        <dbReference type="ChEBI" id="CHEBI:29033"/>
    </cofactor>
</comment>
<comment type="pathway">
    <text evidence="1">Aromatic compound metabolism; 3-phenylpropanoate degradation.</text>
</comment>
<comment type="subunit">
    <text evidence="1">Homotetramer.</text>
</comment>
<comment type="similarity">
    <text evidence="1">Belongs to the LigB/MhpB extradiol dioxygenase family.</text>
</comment>
<gene>
    <name evidence="1" type="primary">mhpB</name>
    <name type="ordered locus">ECED1_0376</name>
</gene>
<organism>
    <name type="scientific">Escherichia coli O81 (strain ED1a)</name>
    <dbReference type="NCBI Taxonomy" id="585397"/>
    <lineage>
        <taxon>Bacteria</taxon>
        <taxon>Pseudomonadati</taxon>
        <taxon>Pseudomonadota</taxon>
        <taxon>Gammaproteobacteria</taxon>
        <taxon>Enterobacterales</taxon>
        <taxon>Enterobacteriaceae</taxon>
        <taxon>Escherichia</taxon>
    </lineage>
</organism>
<sequence>MHAYLHCLSHSPLVGYVDPAQEVLDEVNGVIASARERIAAFSPELVVLFAPDHYNGFFYDVMPPFCLGVGATAIGDFGSAAGELPVPVELAEACAHAVMKSGIDLAVSYCMQVDHGFAQPLEFLLGGLDKVPVLPVFINGVATPLPGFQRTRMLGEAIGRFTSTLNKRVLFLGAGGLSHQPPVPELAKADAHMRDRLLGSGKDLPATERELRQQRVISAAEKFVEDQRTLHPLNPIWDNQFMTLLEQGRIQELDAVSNEELSAIAGKSTHEIKTWVAAFAAISAFGNWRSEGRYYRPIPEWIAGFGSLSARTEN</sequence>
<dbReference type="EC" id="1.13.11.16" evidence="1"/>
<dbReference type="EMBL" id="CU928162">
    <property type="protein sequence ID" value="CAR06587.1"/>
    <property type="molecule type" value="Genomic_DNA"/>
</dbReference>
<dbReference type="RefSeq" id="WP_000543456.1">
    <property type="nucleotide sequence ID" value="NC_011745.1"/>
</dbReference>
<dbReference type="SMR" id="B7MPB5"/>
<dbReference type="KEGG" id="ecq:ECED1_0376"/>
<dbReference type="HOGENOM" id="CLU_078149_0_0_6"/>
<dbReference type="UniPathway" id="UPA00714"/>
<dbReference type="Proteomes" id="UP000000748">
    <property type="component" value="Chromosome"/>
</dbReference>
<dbReference type="GO" id="GO:0047070">
    <property type="term" value="F:3-carboxyethylcatechol 2,3-dioxygenase activity"/>
    <property type="evidence" value="ECO:0007669"/>
    <property type="project" value="UniProtKB-UniRule"/>
</dbReference>
<dbReference type="GO" id="GO:0008198">
    <property type="term" value="F:ferrous iron binding"/>
    <property type="evidence" value="ECO:0007669"/>
    <property type="project" value="InterPro"/>
</dbReference>
<dbReference type="GO" id="GO:0019380">
    <property type="term" value="P:3-phenylpropionate catabolic process"/>
    <property type="evidence" value="ECO:0007669"/>
    <property type="project" value="UniProtKB-UniRule"/>
</dbReference>
<dbReference type="CDD" id="cd07365">
    <property type="entry name" value="MhpB_like"/>
    <property type="match status" value="1"/>
</dbReference>
<dbReference type="Gene3D" id="3.40.830.10">
    <property type="entry name" value="LigB-like"/>
    <property type="match status" value="1"/>
</dbReference>
<dbReference type="HAMAP" id="MF_01653">
    <property type="entry name" value="MhpB"/>
    <property type="match status" value="1"/>
</dbReference>
<dbReference type="InterPro" id="IPR023789">
    <property type="entry name" value="DHPP/DHXA_dioxygenase"/>
</dbReference>
<dbReference type="InterPro" id="IPR004183">
    <property type="entry name" value="Xdiol_dOase_suB"/>
</dbReference>
<dbReference type="NCBIfam" id="NF009907">
    <property type="entry name" value="PRK13370.1-1"/>
    <property type="match status" value="1"/>
</dbReference>
<dbReference type="NCBIfam" id="NF009910">
    <property type="entry name" value="PRK13370.1-4"/>
    <property type="match status" value="1"/>
</dbReference>
<dbReference type="Pfam" id="PF02900">
    <property type="entry name" value="LigB"/>
    <property type="match status" value="1"/>
</dbReference>
<dbReference type="SUPFAM" id="SSF53213">
    <property type="entry name" value="LigB-like"/>
    <property type="match status" value="1"/>
</dbReference>
<feature type="chain" id="PRO_1000187003" description="2,3-dihydroxyphenylpropionate/2,3-dihydroxicinnamic acid 1,2-dioxygenase">
    <location>
        <begin position="1"/>
        <end position="314"/>
    </location>
</feature>
<feature type="active site" description="Proton donor" evidence="1">
    <location>
        <position position="115"/>
    </location>
</feature>
<feature type="active site" description="Proton acceptor" evidence="1">
    <location>
        <position position="179"/>
    </location>
</feature>
<name>MHPB_ECO81</name>
<keyword id="KW-0058">Aromatic hydrocarbons catabolism</keyword>
<keyword id="KW-0223">Dioxygenase</keyword>
<keyword id="KW-0408">Iron</keyword>
<keyword id="KW-0560">Oxidoreductase</keyword>
<protein>
    <recommendedName>
        <fullName evidence="1">2,3-dihydroxyphenylpropionate/2,3-dihydroxicinnamic acid 1,2-dioxygenase</fullName>
        <ecNumber evidence="1">1.13.11.16</ecNumber>
    </recommendedName>
    <alternativeName>
        <fullName evidence="1">3-carboxyethylcatechol 2,3-dioxygenase</fullName>
    </alternativeName>
</protein>
<accession>B7MPB5</accession>